<sequence length="318" mass="34314">MSRPIILDCDPGHDDAIALILALAHPELNPLAVTTSAGNQTPDKTLKNALRILTLLNRSDIPVAGGAVKPLSRELMIADNVHGETGLDGPALPAPSFQPQAVNAVELMAEKIRQSDKPVTLVPTGPLTNIALLLASHGELHAKIERIVLMGGAAGVGNWTPAAEFNIFVDPEAADIVFKSGIPITMCGLDVTHQAQIMDEDIERIRAIPNPVAKCVAELLDFFMIYHRAPKWGFVGAPLHDPCTIAWLLNPALFDAQDCWVGIETQSELTLGMTVVDRYQLTGKPTNATVLFGIDRQGFVDLLVDSLAVYTPTYLNRR</sequence>
<reference key="1">
    <citation type="submission" date="2006-08" db="EMBL/GenBank/DDBJ databases">
        <title>Complete sequence of chromosome 1 of Shewanella sp. MR-7.</title>
        <authorList>
            <person name="Copeland A."/>
            <person name="Lucas S."/>
            <person name="Lapidus A."/>
            <person name="Barry K."/>
            <person name="Detter J.C."/>
            <person name="Glavina del Rio T."/>
            <person name="Hammon N."/>
            <person name="Israni S."/>
            <person name="Dalin E."/>
            <person name="Tice H."/>
            <person name="Pitluck S."/>
            <person name="Kiss H."/>
            <person name="Brettin T."/>
            <person name="Bruce D."/>
            <person name="Han C."/>
            <person name="Tapia R."/>
            <person name="Gilna P."/>
            <person name="Schmutz J."/>
            <person name="Larimer F."/>
            <person name="Land M."/>
            <person name="Hauser L."/>
            <person name="Kyrpides N."/>
            <person name="Mikhailova N."/>
            <person name="Nealson K."/>
            <person name="Konstantinidis K."/>
            <person name="Klappenbach J."/>
            <person name="Tiedje J."/>
            <person name="Richardson P."/>
        </authorList>
    </citation>
    <scope>NUCLEOTIDE SEQUENCE [LARGE SCALE GENOMIC DNA]</scope>
    <source>
        <strain>MR-7</strain>
    </source>
</reference>
<name>RIHA_SHESR</name>
<proteinExistence type="inferred from homology"/>
<dbReference type="EC" id="3.2.-.-" evidence="1"/>
<dbReference type="EMBL" id="CP000444">
    <property type="protein sequence ID" value="ABI41650.1"/>
    <property type="molecule type" value="Genomic_DNA"/>
</dbReference>
<dbReference type="SMR" id="Q0HZ05"/>
<dbReference type="KEGG" id="shm:Shewmr7_0647"/>
<dbReference type="HOGENOM" id="CLU_036838_2_0_6"/>
<dbReference type="GO" id="GO:0005829">
    <property type="term" value="C:cytosol"/>
    <property type="evidence" value="ECO:0007669"/>
    <property type="project" value="TreeGrafter"/>
</dbReference>
<dbReference type="GO" id="GO:0008477">
    <property type="term" value="F:purine nucleosidase activity"/>
    <property type="evidence" value="ECO:0007669"/>
    <property type="project" value="TreeGrafter"/>
</dbReference>
<dbReference type="GO" id="GO:0045437">
    <property type="term" value="F:uridine nucleosidase activity"/>
    <property type="evidence" value="ECO:0007669"/>
    <property type="project" value="InterPro"/>
</dbReference>
<dbReference type="GO" id="GO:0015949">
    <property type="term" value="P:nucleobase-containing small molecule interconversion"/>
    <property type="evidence" value="ECO:0007669"/>
    <property type="project" value="InterPro"/>
</dbReference>
<dbReference type="GO" id="GO:0006152">
    <property type="term" value="P:purine nucleoside catabolic process"/>
    <property type="evidence" value="ECO:0007669"/>
    <property type="project" value="TreeGrafter"/>
</dbReference>
<dbReference type="GO" id="GO:0006206">
    <property type="term" value="P:pyrimidine nucleobase metabolic process"/>
    <property type="evidence" value="ECO:0007669"/>
    <property type="project" value="UniProtKB-UniRule"/>
</dbReference>
<dbReference type="CDD" id="cd02651">
    <property type="entry name" value="nuc_hydro_IU_UC_XIUA"/>
    <property type="match status" value="1"/>
</dbReference>
<dbReference type="FunFam" id="3.90.245.10:FF:000001">
    <property type="entry name" value="Pyrimidine-specific ribonucleoside hydrolase RihA"/>
    <property type="match status" value="1"/>
</dbReference>
<dbReference type="Gene3D" id="3.90.245.10">
    <property type="entry name" value="Ribonucleoside hydrolase-like"/>
    <property type="match status" value="1"/>
</dbReference>
<dbReference type="HAMAP" id="MF_01431">
    <property type="entry name" value="Pyrim_hydro_RihA"/>
    <property type="match status" value="1"/>
</dbReference>
<dbReference type="InterPro" id="IPR015910">
    <property type="entry name" value="I/U_nuclsd_hydro_CS"/>
</dbReference>
<dbReference type="InterPro" id="IPR001910">
    <property type="entry name" value="Inosine/uridine_hydrolase_dom"/>
</dbReference>
<dbReference type="InterPro" id="IPR023186">
    <property type="entry name" value="IUNH"/>
</dbReference>
<dbReference type="InterPro" id="IPR022975">
    <property type="entry name" value="Pyrim_hydro_RihA"/>
</dbReference>
<dbReference type="InterPro" id="IPR036452">
    <property type="entry name" value="Ribo_hydro-like"/>
</dbReference>
<dbReference type="NCBIfam" id="NF007761">
    <property type="entry name" value="PRK10443.1"/>
    <property type="match status" value="1"/>
</dbReference>
<dbReference type="PANTHER" id="PTHR12304">
    <property type="entry name" value="INOSINE-URIDINE PREFERRING NUCLEOSIDE HYDROLASE"/>
    <property type="match status" value="1"/>
</dbReference>
<dbReference type="PANTHER" id="PTHR12304:SF4">
    <property type="entry name" value="URIDINE NUCLEOSIDASE"/>
    <property type="match status" value="1"/>
</dbReference>
<dbReference type="Pfam" id="PF01156">
    <property type="entry name" value="IU_nuc_hydro"/>
    <property type="match status" value="1"/>
</dbReference>
<dbReference type="SUPFAM" id="SSF53590">
    <property type="entry name" value="Nucleoside hydrolase"/>
    <property type="match status" value="1"/>
</dbReference>
<dbReference type="PROSITE" id="PS01247">
    <property type="entry name" value="IUNH"/>
    <property type="match status" value="1"/>
</dbReference>
<keyword id="KW-0326">Glycosidase</keyword>
<keyword id="KW-0378">Hydrolase</keyword>
<comment type="function">
    <text evidence="1">Hydrolyzes cytidine or uridine to ribose and cytosine or uracil, respectively.</text>
</comment>
<comment type="similarity">
    <text evidence="1">Belongs to the IUNH family. RihA subfamily.</text>
</comment>
<feature type="chain" id="PRO_1000024401" description="Pyrimidine-specific ribonucleoside hydrolase RihA">
    <location>
        <begin position="1"/>
        <end position="318"/>
    </location>
</feature>
<feature type="active site" evidence="1">
    <location>
        <position position="240"/>
    </location>
</feature>
<organism>
    <name type="scientific">Shewanella sp. (strain MR-7)</name>
    <dbReference type="NCBI Taxonomy" id="60481"/>
    <lineage>
        <taxon>Bacteria</taxon>
        <taxon>Pseudomonadati</taxon>
        <taxon>Pseudomonadota</taxon>
        <taxon>Gammaproteobacteria</taxon>
        <taxon>Alteromonadales</taxon>
        <taxon>Shewanellaceae</taxon>
        <taxon>Shewanella</taxon>
    </lineage>
</organism>
<gene>
    <name evidence="1" type="primary">rihA</name>
    <name type="ordered locus">Shewmr7_0647</name>
</gene>
<accession>Q0HZ05</accession>
<protein>
    <recommendedName>
        <fullName evidence="1">Pyrimidine-specific ribonucleoside hydrolase RihA</fullName>
        <ecNumber evidence="1">3.2.-.-</ecNumber>
    </recommendedName>
    <alternativeName>
        <fullName evidence="1">Cytidine/uridine-specific hydrolase</fullName>
    </alternativeName>
</protein>
<evidence type="ECO:0000255" key="1">
    <source>
        <dbReference type="HAMAP-Rule" id="MF_01431"/>
    </source>
</evidence>